<comment type="function">
    <text evidence="1">Involved in the biosynthesis of the chorismate, which leads to the biosynthesis of aromatic amino acids. Catalyzes the reversible NADPH linked reduction of 3-dehydroshikimate (DHSA) to yield shikimate (SA).</text>
</comment>
<comment type="catalytic activity">
    <reaction evidence="1">
        <text>shikimate + NADP(+) = 3-dehydroshikimate + NADPH + H(+)</text>
        <dbReference type="Rhea" id="RHEA:17737"/>
        <dbReference type="ChEBI" id="CHEBI:15378"/>
        <dbReference type="ChEBI" id="CHEBI:16630"/>
        <dbReference type="ChEBI" id="CHEBI:36208"/>
        <dbReference type="ChEBI" id="CHEBI:57783"/>
        <dbReference type="ChEBI" id="CHEBI:58349"/>
        <dbReference type="EC" id="1.1.1.25"/>
    </reaction>
</comment>
<comment type="pathway">
    <text evidence="1">Metabolic intermediate biosynthesis; chorismate biosynthesis; chorismate from D-erythrose 4-phosphate and phosphoenolpyruvate: step 4/7.</text>
</comment>
<comment type="subunit">
    <text evidence="1">Homodimer.</text>
</comment>
<comment type="similarity">
    <text evidence="1">Belongs to the shikimate dehydrogenase family.</text>
</comment>
<sequence>MDTYAVIGNPITHSKSPFIHTQFAQQTGRSMCYTTLLAPLDGFERTVTTFRENGGIGLNITVPFKFEAYALATRLTDRARAAHAVNTFRFEQENEILGDNTDGVGLVRDITINLDFALPGKHVLLMGAGGAASGVILPLLQQKPGLLAIANRTPDKAIALQQQFVNHGNITGGHYQDFIGQQFDLIINATSASLHNALPPIPADLFHGTALVYDMLYSSKLTPFLEFASTQGVTNLVDGTGMLVEQAAESFLLWHGIRPETQNVIRQLRDELHLHAS</sequence>
<reference key="1">
    <citation type="journal article" date="2007" name="Environ. Microbiol.">
        <title>Whole-genome analysis of the ammonia-oxidizing bacterium, Nitrosomonas eutropha C91: implications for niche adaptation.</title>
        <authorList>
            <person name="Stein L.Y."/>
            <person name="Arp D.J."/>
            <person name="Berube P.M."/>
            <person name="Chain P.S."/>
            <person name="Hauser L."/>
            <person name="Jetten M.S."/>
            <person name="Klotz M.G."/>
            <person name="Larimer F.W."/>
            <person name="Norton J.M."/>
            <person name="Op den Camp H.J.M."/>
            <person name="Shin M."/>
            <person name="Wei X."/>
        </authorList>
    </citation>
    <scope>NUCLEOTIDE SEQUENCE [LARGE SCALE GENOMIC DNA]</scope>
    <source>
        <strain>DSM 101675 / C91 / Nm57</strain>
    </source>
</reference>
<gene>
    <name evidence="1" type="primary">aroE</name>
    <name type="ordered locus">Neut_0496</name>
</gene>
<accession>Q0AIP9</accession>
<keyword id="KW-0028">Amino-acid biosynthesis</keyword>
<keyword id="KW-0057">Aromatic amino acid biosynthesis</keyword>
<keyword id="KW-0521">NADP</keyword>
<keyword id="KW-0560">Oxidoreductase</keyword>
<feature type="chain" id="PRO_1000021313" description="Shikimate dehydrogenase (NADP(+))">
    <location>
        <begin position="1"/>
        <end position="277"/>
    </location>
</feature>
<feature type="active site" description="Proton acceptor" evidence="1">
    <location>
        <position position="65"/>
    </location>
</feature>
<feature type="binding site" evidence="1">
    <location>
        <begin position="14"/>
        <end position="16"/>
    </location>
    <ligand>
        <name>shikimate</name>
        <dbReference type="ChEBI" id="CHEBI:36208"/>
    </ligand>
</feature>
<feature type="binding site" evidence="1">
    <location>
        <position position="61"/>
    </location>
    <ligand>
        <name>shikimate</name>
        <dbReference type="ChEBI" id="CHEBI:36208"/>
    </ligand>
</feature>
<feature type="binding site" evidence="1">
    <location>
        <position position="77"/>
    </location>
    <ligand>
        <name>NADP(+)</name>
        <dbReference type="ChEBI" id="CHEBI:58349"/>
    </ligand>
</feature>
<feature type="binding site" evidence="1">
    <location>
        <position position="86"/>
    </location>
    <ligand>
        <name>shikimate</name>
        <dbReference type="ChEBI" id="CHEBI:36208"/>
    </ligand>
</feature>
<feature type="binding site" evidence="1">
    <location>
        <position position="102"/>
    </location>
    <ligand>
        <name>shikimate</name>
        <dbReference type="ChEBI" id="CHEBI:36208"/>
    </ligand>
</feature>
<feature type="binding site" evidence="1">
    <location>
        <begin position="127"/>
        <end position="131"/>
    </location>
    <ligand>
        <name>NADP(+)</name>
        <dbReference type="ChEBI" id="CHEBI:58349"/>
    </ligand>
</feature>
<feature type="binding site" evidence="1">
    <location>
        <begin position="151"/>
        <end position="156"/>
    </location>
    <ligand>
        <name>NADP(+)</name>
        <dbReference type="ChEBI" id="CHEBI:58349"/>
    </ligand>
</feature>
<feature type="binding site" evidence="1">
    <location>
        <position position="215"/>
    </location>
    <ligand>
        <name>NADP(+)</name>
        <dbReference type="ChEBI" id="CHEBI:58349"/>
    </ligand>
</feature>
<feature type="binding site" evidence="1">
    <location>
        <position position="217"/>
    </location>
    <ligand>
        <name>shikimate</name>
        <dbReference type="ChEBI" id="CHEBI:36208"/>
    </ligand>
</feature>
<feature type="binding site" evidence="1">
    <location>
        <position position="239"/>
    </location>
    <ligand>
        <name>NADP(+)</name>
        <dbReference type="ChEBI" id="CHEBI:58349"/>
    </ligand>
</feature>
<name>AROE_NITEC</name>
<proteinExistence type="inferred from homology"/>
<evidence type="ECO:0000255" key="1">
    <source>
        <dbReference type="HAMAP-Rule" id="MF_00222"/>
    </source>
</evidence>
<dbReference type="EC" id="1.1.1.25" evidence="1"/>
<dbReference type="EMBL" id="CP000450">
    <property type="protein sequence ID" value="ABI58772.1"/>
    <property type="molecule type" value="Genomic_DNA"/>
</dbReference>
<dbReference type="RefSeq" id="WP_011633614.1">
    <property type="nucleotide sequence ID" value="NC_008344.1"/>
</dbReference>
<dbReference type="SMR" id="Q0AIP9"/>
<dbReference type="STRING" id="335283.Neut_0496"/>
<dbReference type="KEGG" id="net:Neut_0496"/>
<dbReference type="eggNOG" id="COG0169">
    <property type="taxonomic scope" value="Bacteria"/>
</dbReference>
<dbReference type="HOGENOM" id="CLU_044063_2_1_4"/>
<dbReference type="OrthoDB" id="9776868at2"/>
<dbReference type="UniPathway" id="UPA00053">
    <property type="reaction ID" value="UER00087"/>
</dbReference>
<dbReference type="Proteomes" id="UP000001966">
    <property type="component" value="Chromosome"/>
</dbReference>
<dbReference type="GO" id="GO:0005829">
    <property type="term" value="C:cytosol"/>
    <property type="evidence" value="ECO:0007669"/>
    <property type="project" value="TreeGrafter"/>
</dbReference>
<dbReference type="GO" id="GO:0050661">
    <property type="term" value="F:NADP binding"/>
    <property type="evidence" value="ECO:0007669"/>
    <property type="project" value="InterPro"/>
</dbReference>
<dbReference type="GO" id="GO:0004764">
    <property type="term" value="F:shikimate 3-dehydrogenase (NADP+) activity"/>
    <property type="evidence" value="ECO:0007669"/>
    <property type="project" value="UniProtKB-UniRule"/>
</dbReference>
<dbReference type="GO" id="GO:0008652">
    <property type="term" value="P:amino acid biosynthetic process"/>
    <property type="evidence" value="ECO:0007669"/>
    <property type="project" value="UniProtKB-KW"/>
</dbReference>
<dbReference type="GO" id="GO:0009073">
    <property type="term" value="P:aromatic amino acid family biosynthetic process"/>
    <property type="evidence" value="ECO:0007669"/>
    <property type="project" value="UniProtKB-KW"/>
</dbReference>
<dbReference type="GO" id="GO:0009423">
    <property type="term" value="P:chorismate biosynthetic process"/>
    <property type="evidence" value="ECO:0007669"/>
    <property type="project" value="UniProtKB-UniRule"/>
</dbReference>
<dbReference type="GO" id="GO:0019632">
    <property type="term" value="P:shikimate metabolic process"/>
    <property type="evidence" value="ECO:0007669"/>
    <property type="project" value="InterPro"/>
</dbReference>
<dbReference type="CDD" id="cd01065">
    <property type="entry name" value="NAD_bind_Shikimate_DH"/>
    <property type="match status" value="1"/>
</dbReference>
<dbReference type="FunFam" id="3.40.50.10860:FF:000006">
    <property type="entry name" value="Shikimate dehydrogenase (NADP(+))"/>
    <property type="match status" value="1"/>
</dbReference>
<dbReference type="Gene3D" id="3.40.50.10860">
    <property type="entry name" value="Leucine Dehydrogenase, chain A, domain 1"/>
    <property type="match status" value="1"/>
</dbReference>
<dbReference type="Gene3D" id="3.40.50.720">
    <property type="entry name" value="NAD(P)-binding Rossmann-like Domain"/>
    <property type="match status" value="1"/>
</dbReference>
<dbReference type="HAMAP" id="MF_00222">
    <property type="entry name" value="Shikimate_DH_AroE"/>
    <property type="match status" value="1"/>
</dbReference>
<dbReference type="InterPro" id="IPR046346">
    <property type="entry name" value="Aminoacid_DH-like_N_sf"/>
</dbReference>
<dbReference type="InterPro" id="IPR036291">
    <property type="entry name" value="NAD(P)-bd_dom_sf"/>
</dbReference>
<dbReference type="InterPro" id="IPR041121">
    <property type="entry name" value="SDH_C"/>
</dbReference>
<dbReference type="InterPro" id="IPR011342">
    <property type="entry name" value="Shikimate_DH"/>
</dbReference>
<dbReference type="InterPro" id="IPR013708">
    <property type="entry name" value="Shikimate_DH-bd_N"/>
</dbReference>
<dbReference type="InterPro" id="IPR022893">
    <property type="entry name" value="Shikimate_DH_fam"/>
</dbReference>
<dbReference type="InterPro" id="IPR006151">
    <property type="entry name" value="Shikm_DH/Glu-tRNA_Rdtase"/>
</dbReference>
<dbReference type="NCBIfam" id="TIGR00507">
    <property type="entry name" value="aroE"/>
    <property type="match status" value="1"/>
</dbReference>
<dbReference type="NCBIfam" id="NF001310">
    <property type="entry name" value="PRK00258.1-2"/>
    <property type="match status" value="1"/>
</dbReference>
<dbReference type="PANTHER" id="PTHR21089:SF1">
    <property type="entry name" value="BIFUNCTIONAL 3-DEHYDROQUINATE DEHYDRATASE_SHIKIMATE DEHYDROGENASE, CHLOROPLASTIC"/>
    <property type="match status" value="1"/>
</dbReference>
<dbReference type="PANTHER" id="PTHR21089">
    <property type="entry name" value="SHIKIMATE DEHYDROGENASE"/>
    <property type="match status" value="1"/>
</dbReference>
<dbReference type="Pfam" id="PF18317">
    <property type="entry name" value="SDH_C"/>
    <property type="match status" value="1"/>
</dbReference>
<dbReference type="Pfam" id="PF01488">
    <property type="entry name" value="Shikimate_DH"/>
    <property type="match status" value="1"/>
</dbReference>
<dbReference type="Pfam" id="PF08501">
    <property type="entry name" value="Shikimate_dh_N"/>
    <property type="match status" value="1"/>
</dbReference>
<dbReference type="SUPFAM" id="SSF53223">
    <property type="entry name" value="Aminoacid dehydrogenase-like, N-terminal domain"/>
    <property type="match status" value="1"/>
</dbReference>
<dbReference type="SUPFAM" id="SSF51735">
    <property type="entry name" value="NAD(P)-binding Rossmann-fold domains"/>
    <property type="match status" value="1"/>
</dbReference>
<protein>
    <recommendedName>
        <fullName evidence="1">Shikimate dehydrogenase (NADP(+))</fullName>
        <shortName evidence="1">SDH</shortName>
        <ecNumber evidence="1">1.1.1.25</ecNumber>
    </recommendedName>
</protein>
<organism>
    <name type="scientific">Nitrosomonas eutropha (strain DSM 101675 / C91 / Nm57)</name>
    <dbReference type="NCBI Taxonomy" id="335283"/>
    <lineage>
        <taxon>Bacteria</taxon>
        <taxon>Pseudomonadati</taxon>
        <taxon>Pseudomonadota</taxon>
        <taxon>Betaproteobacteria</taxon>
        <taxon>Nitrosomonadales</taxon>
        <taxon>Nitrosomonadaceae</taxon>
        <taxon>Nitrosomonas</taxon>
    </lineage>
</organism>